<reference key="1">
    <citation type="journal article" date="2009" name="PLoS Genet.">
        <title>Adaptations to submarine hydrothermal environments exemplified by the genome of Nautilia profundicola.</title>
        <authorList>
            <person name="Campbell B.J."/>
            <person name="Smith J.L."/>
            <person name="Hanson T.E."/>
            <person name="Klotz M.G."/>
            <person name="Stein L.Y."/>
            <person name="Lee C.K."/>
            <person name="Wu D."/>
            <person name="Robinson J.M."/>
            <person name="Khouri H.M."/>
            <person name="Eisen J.A."/>
            <person name="Cary S.C."/>
        </authorList>
    </citation>
    <scope>NUCLEOTIDE SEQUENCE [LARGE SCALE GENOMIC DNA]</scope>
    <source>
        <strain>ATCC BAA-1463 / DSM 18972 / AmH</strain>
    </source>
</reference>
<organism>
    <name type="scientific">Nautilia profundicola (strain ATCC BAA-1463 / DSM 18972 / AmH)</name>
    <dbReference type="NCBI Taxonomy" id="598659"/>
    <lineage>
        <taxon>Bacteria</taxon>
        <taxon>Pseudomonadati</taxon>
        <taxon>Campylobacterota</taxon>
        <taxon>Epsilonproteobacteria</taxon>
        <taxon>Nautiliales</taxon>
        <taxon>Nautiliaceae</taxon>
        <taxon>Nautilia</taxon>
    </lineage>
</organism>
<accession>B9L6T8</accession>
<feature type="chain" id="PRO_1000165416" description="Small ribosomal subunit protein uS4">
    <location>
        <begin position="1"/>
        <end position="208"/>
    </location>
</feature>
<feature type="domain" description="S4 RNA-binding" evidence="1">
    <location>
        <begin position="98"/>
        <end position="160"/>
    </location>
</feature>
<name>RS4_NAUPA</name>
<dbReference type="EMBL" id="CP001279">
    <property type="protein sequence ID" value="ACM93746.1"/>
    <property type="molecule type" value="Genomic_DNA"/>
</dbReference>
<dbReference type="RefSeq" id="WP_015902798.1">
    <property type="nucleotide sequence ID" value="NC_012115.1"/>
</dbReference>
<dbReference type="SMR" id="B9L6T8"/>
<dbReference type="STRING" id="598659.NAMH_1696"/>
<dbReference type="KEGG" id="nam:NAMH_1696"/>
<dbReference type="eggNOG" id="COG0522">
    <property type="taxonomic scope" value="Bacteria"/>
</dbReference>
<dbReference type="HOGENOM" id="CLU_092403_0_2_7"/>
<dbReference type="OrthoDB" id="9803672at2"/>
<dbReference type="Proteomes" id="UP000000448">
    <property type="component" value="Chromosome"/>
</dbReference>
<dbReference type="GO" id="GO:0015935">
    <property type="term" value="C:small ribosomal subunit"/>
    <property type="evidence" value="ECO:0007669"/>
    <property type="project" value="InterPro"/>
</dbReference>
<dbReference type="GO" id="GO:0019843">
    <property type="term" value="F:rRNA binding"/>
    <property type="evidence" value="ECO:0007669"/>
    <property type="project" value="UniProtKB-UniRule"/>
</dbReference>
<dbReference type="GO" id="GO:0003735">
    <property type="term" value="F:structural constituent of ribosome"/>
    <property type="evidence" value="ECO:0007669"/>
    <property type="project" value="InterPro"/>
</dbReference>
<dbReference type="GO" id="GO:0042274">
    <property type="term" value="P:ribosomal small subunit biogenesis"/>
    <property type="evidence" value="ECO:0007669"/>
    <property type="project" value="TreeGrafter"/>
</dbReference>
<dbReference type="GO" id="GO:0006412">
    <property type="term" value="P:translation"/>
    <property type="evidence" value="ECO:0007669"/>
    <property type="project" value="UniProtKB-UniRule"/>
</dbReference>
<dbReference type="CDD" id="cd00165">
    <property type="entry name" value="S4"/>
    <property type="match status" value="1"/>
</dbReference>
<dbReference type="FunFam" id="1.10.1050.10:FF:000001">
    <property type="entry name" value="30S ribosomal protein S4"/>
    <property type="match status" value="1"/>
</dbReference>
<dbReference type="FunFam" id="3.10.290.10:FF:000001">
    <property type="entry name" value="30S ribosomal protein S4"/>
    <property type="match status" value="1"/>
</dbReference>
<dbReference type="Gene3D" id="1.10.1050.10">
    <property type="entry name" value="Ribosomal Protein S4 Delta 41, Chain A, domain 1"/>
    <property type="match status" value="1"/>
</dbReference>
<dbReference type="Gene3D" id="3.10.290.10">
    <property type="entry name" value="RNA-binding S4 domain"/>
    <property type="match status" value="1"/>
</dbReference>
<dbReference type="HAMAP" id="MF_01306_B">
    <property type="entry name" value="Ribosomal_uS4_B"/>
    <property type="match status" value="1"/>
</dbReference>
<dbReference type="InterPro" id="IPR022801">
    <property type="entry name" value="Ribosomal_uS4"/>
</dbReference>
<dbReference type="InterPro" id="IPR005709">
    <property type="entry name" value="Ribosomal_uS4_bac-type"/>
</dbReference>
<dbReference type="InterPro" id="IPR018079">
    <property type="entry name" value="Ribosomal_uS4_CS"/>
</dbReference>
<dbReference type="InterPro" id="IPR001912">
    <property type="entry name" value="Ribosomal_uS4_N"/>
</dbReference>
<dbReference type="InterPro" id="IPR002942">
    <property type="entry name" value="S4_RNA-bd"/>
</dbReference>
<dbReference type="InterPro" id="IPR036986">
    <property type="entry name" value="S4_RNA-bd_sf"/>
</dbReference>
<dbReference type="NCBIfam" id="NF003717">
    <property type="entry name" value="PRK05327.1"/>
    <property type="match status" value="1"/>
</dbReference>
<dbReference type="NCBIfam" id="TIGR01017">
    <property type="entry name" value="rpsD_bact"/>
    <property type="match status" value="1"/>
</dbReference>
<dbReference type="PANTHER" id="PTHR11831">
    <property type="entry name" value="30S 40S RIBOSOMAL PROTEIN"/>
    <property type="match status" value="1"/>
</dbReference>
<dbReference type="PANTHER" id="PTHR11831:SF4">
    <property type="entry name" value="SMALL RIBOSOMAL SUBUNIT PROTEIN US4M"/>
    <property type="match status" value="1"/>
</dbReference>
<dbReference type="Pfam" id="PF00163">
    <property type="entry name" value="Ribosomal_S4"/>
    <property type="match status" value="1"/>
</dbReference>
<dbReference type="Pfam" id="PF01479">
    <property type="entry name" value="S4"/>
    <property type="match status" value="1"/>
</dbReference>
<dbReference type="SMART" id="SM01390">
    <property type="entry name" value="Ribosomal_S4"/>
    <property type="match status" value="1"/>
</dbReference>
<dbReference type="SMART" id="SM00363">
    <property type="entry name" value="S4"/>
    <property type="match status" value="1"/>
</dbReference>
<dbReference type="SUPFAM" id="SSF55174">
    <property type="entry name" value="Alpha-L RNA-binding motif"/>
    <property type="match status" value="1"/>
</dbReference>
<dbReference type="PROSITE" id="PS00632">
    <property type="entry name" value="RIBOSOMAL_S4"/>
    <property type="match status" value="1"/>
</dbReference>
<dbReference type="PROSITE" id="PS50889">
    <property type="entry name" value="S4"/>
    <property type="match status" value="1"/>
</dbReference>
<sequence>MARYTGPVEKIERRLGVSLELKGERRLAGKSALDKRPYAPGQHGQRRTKISEYGLQLREKQKIKFYYGVLEKQFRKFFREANRQEGNTGENLIKLLERRLDNVVYRMGFASTRRFARQLVTHGHILVNGKKVNIPSYLVKEGDRIEIREKSKNNVQIQRALELSQQTGIAPWVDVDKEKLVGVFQRVPEREEVNIPVEERLVVELYSK</sequence>
<proteinExistence type="inferred from homology"/>
<protein>
    <recommendedName>
        <fullName evidence="1">Small ribosomal subunit protein uS4</fullName>
    </recommendedName>
    <alternativeName>
        <fullName evidence="2">30S ribosomal protein S4</fullName>
    </alternativeName>
</protein>
<gene>
    <name evidence="1" type="primary">rpsD</name>
    <name type="ordered locus">NAMH_1696</name>
</gene>
<comment type="function">
    <text evidence="1">One of the primary rRNA binding proteins, it binds directly to 16S rRNA where it nucleates assembly of the body of the 30S subunit.</text>
</comment>
<comment type="function">
    <text evidence="1">With S5 and S12 plays an important role in translational accuracy.</text>
</comment>
<comment type="subunit">
    <text evidence="1">Part of the 30S ribosomal subunit. Contacts protein S5. The interaction surface between S4 and S5 is involved in control of translational fidelity.</text>
</comment>
<comment type="similarity">
    <text evidence="1">Belongs to the universal ribosomal protein uS4 family.</text>
</comment>
<evidence type="ECO:0000255" key="1">
    <source>
        <dbReference type="HAMAP-Rule" id="MF_01306"/>
    </source>
</evidence>
<evidence type="ECO:0000305" key="2"/>
<keyword id="KW-0687">Ribonucleoprotein</keyword>
<keyword id="KW-0689">Ribosomal protein</keyword>
<keyword id="KW-0694">RNA-binding</keyword>
<keyword id="KW-0699">rRNA-binding</keyword>